<gene>
    <name evidence="1" type="primary">prfA</name>
    <name type="ordered locus">NWMN_2022</name>
</gene>
<comment type="function">
    <text evidence="1">Peptide chain release factor 1 directs the termination of translation in response to the peptide chain termination codons UAG and UAA.</text>
</comment>
<comment type="subcellular location">
    <subcellularLocation>
        <location evidence="1">Cytoplasm</location>
    </subcellularLocation>
</comment>
<comment type="PTM">
    <text evidence="1">Methylated by PrmC. Methylation increases the termination efficiency of RF1.</text>
</comment>
<comment type="similarity">
    <text evidence="1">Belongs to the prokaryotic/mitochondrial release factor family.</text>
</comment>
<name>RF1_STAAE</name>
<feature type="chain" id="PRO_1000071266" description="Peptide chain release factor 1">
    <location>
        <begin position="1"/>
        <end position="358"/>
    </location>
</feature>
<feature type="modified residue" description="N5-methylglutamine" evidence="1">
    <location>
        <position position="233"/>
    </location>
</feature>
<reference key="1">
    <citation type="journal article" date="2008" name="J. Bacteriol.">
        <title>Genome sequence of Staphylococcus aureus strain Newman and comparative analysis of staphylococcal genomes: polymorphism and evolution of two major pathogenicity islands.</title>
        <authorList>
            <person name="Baba T."/>
            <person name="Bae T."/>
            <person name="Schneewind O."/>
            <person name="Takeuchi F."/>
            <person name="Hiramatsu K."/>
        </authorList>
    </citation>
    <scope>NUCLEOTIDE SEQUENCE [LARGE SCALE GENOMIC DNA]</scope>
    <source>
        <strain>Newman</strain>
    </source>
</reference>
<dbReference type="EMBL" id="AP009351">
    <property type="protein sequence ID" value="BAF68294.1"/>
    <property type="molecule type" value="Genomic_DNA"/>
</dbReference>
<dbReference type="RefSeq" id="WP_000460242.1">
    <property type="nucleotide sequence ID" value="NZ_JBBIAE010000008.1"/>
</dbReference>
<dbReference type="SMR" id="A6QIW2"/>
<dbReference type="KEGG" id="sae:NWMN_2022"/>
<dbReference type="HOGENOM" id="CLU_036856_0_1_9"/>
<dbReference type="Proteomes" id="UP000006386">
    <property type="component" value="Chromosome"/>
</dbReference>
<dbReference type="GO" id="GO:0005737">
    <property type="term" value="C:cytoplasm"/>
    <property type="evidence" value="ECO:0007669"/>
    <property type="project" value="UniProtKB-SubCell"/>
</dbReference>
<dbReference type="GO" id="GO:0016149">
    <property type="term" value="F:translation release factor activity, codon specific"/>
    <property type="evidence" value="ECO:0007669"/>
    <property type="project" value="UniProtKB-UniRule"/>
</dbReference>
<dbReference type="FunFam" id="3.30.160.20:FF:000004">
    <property type="entry name" value="Peptide chain release factor 1"/>
    <property type="match status" value="1"/>
</dbReference>
<dbReference type="FunFam" id="3.30.70.1660:FF:000002">
    <property type="entry name" value="Peptide chain release factor 1"/>
    <property type="match status" value="1"/>
</dbReference>
<dbReference type="FunFam" id="3.30.70.1660:FF:000004">
    <property type="entry name" value="Peptide chain release factor 1"/>
    <property type="match status" value="1"/>
</dbReference>
<dbReference type="Gene3D" id="3.30.160.20">
    <property type="match status" value="1"/>
</dbReference>
<dbReference type="Gene3D" id="3.30.70.1660">
    <property type="match status" value="1"/>
</dbReference>
<dbReference type="Gene3D" id="6.10.140.1950">
    <property type="match status" value="1"/>
</dbReference>
<dbReference type="HAMAP" id="MF_00093">
    <property type="entry name" value="Rel_fac_1"/>
    <property type="match status" value="1"/>
</dbReference>
<dbReference type="InterPro" id="IPR005139">
    <property type="entry name" value="PCRF"/>
</dbReference>
<dbReference type="InterPro" id="IPR000352">
    <property type="entry name" value="Pep_chain_release_fac_I"/>
</dbReference>
<dbReference type="InterPro" id="IPR045853">
    <property type="entry name" value="Pep_chain_release_fac_I_sf"/>
</dbReference>
<dbReference type="InterPro" id="IPR050057">
    <property type="entry name" value="Prokaryotic/Mito_RF"/>
</dbReference>
<dbReference type="InterPro" id="IPR004373">
    <property type="entry name" value="RF-1"/>
</dbReference>
<dbReference type="NCBIfam" id="TIGR00019">
    <property type="entry name" value="prfA"/>
    <property type="match status" value="1"/>
</dbReference>
<dbReference type="NCBIfam" id="NF001859">
    <property type="entry name" value="PRK00591.1"/>
    <property type="match status" value="1"/>
</dbReference>
<dbReference type="PANTHER" id="PTHR43804">
    <property type="entry name" value="LD18447P"/>
    <property type="match status" value="1"/>
</dbReference>
<dbReference type="PANTHER" id="PTHR43804:SF7">
    <property type="entry name" value="LD18447P"/>
    <property type="match status" value="1"/>
</dbReference>
<dbReference type="Pfam" id="PF03462">
    <property type="entry name" value="PCRF"/>
    <property type="match status" value="1"/>
</dbReference>
<dbReference type="Pfam" id="PF00472">
    <property type="entry name" value="RF-1"/>
    <property type="match status" value="1"/>
</dbReference>
<dbReference type="SMART" id="SM00937">
    <property type="entry name" value="PCRF"/>
    <property type="match status" value="1"/>
</dbReference>
<dbReference type="SUPFAM" id="SSF75620">
    <property type="entry name" value="Release factor"/>
    <property type="match status" value="1"/>
</dbReference>
<dbReference type="PROSITE" id="PS00745">
    <property type="entry name" value="RF_PROK_I"/>
    <property type="match status" value="1"/>
</dbReference>
<proteinExistence type="inferred from homology"/>
<evidence type="ECO:0000255" key="1">
    <source>
        <dbReference type="HAMAP-Rule" id="MF_00093"/>
    </source>
</evidence>
<sequence length="358" mass="40350">MFDQLDIVEERYEQLNELLSDPDVVNDSDKLRKYSKEQADLQKTVDVYRNYKAKKEELADIEEMLSETDDKEEVEMLKEESNGIKAELPNLEEELKILLIPKDPNDDKDVIVEIRAAAGGDEAAIFAGDLMRMYSKYAESQGFKTEIVEASESDHGGYKEISFSVSGNGAYSKLKFENGAHRVQRVPETESGGRIHTSTATVAVLPEVEDVEIEIRNEDLKIDTYRSSGAGGQHVNTTDSAVRITHLPTGVIATSSEKSQIQNREKAMKVLKARLYDMKVQEEQQKYASQRKSAVGTGDRSERIRTYNYPQSRVTDHRIGLTLQKLGQIMEGHLEEIIDALTLSEQTDKLKELNNGEL</sequence>
<accession>A6QIW2</accession>
<keyword id="KW-0963">Cytoplasm</keyword>
<keyword id="KW-0488">Methylation</keyword>
<keyword id="KW-0648">Protein biosynthesis</keyword>
<organism>
    <name type="scientific">Staphylococcus aureus (strain Newman)</name>
    <dbReference type="NCBI Taxonomy" id="426430"/>
    <lineage>
        <taxon>Bacteria</taxon>
        <taxon>Bacillati</taxon>
        <taxon>Bacillota</taxon>
        <taxon>Bacilli</taxon>
        <taxon>Bacillales</taxon>
        <taxon>Staphylococcaceae</taxon>
        <taxon>Staphylococcus</taxon>
    </lineage>
</organism>
<protein>
    <recommendedName>
        <fullName evidence="1">Peptide chain release factor 1</fullName>
        <shortName evidence="1">RF-1</shortName>
    </recommendedName>
</protein>